<dbReference type="EMBL" id="BC109708">
    <property type="protein sequence ID" value="AAI09709.1"/>
    <property type="molecule type" value="mRNA"/>
</dbReference>
<dbReference type="RefSeq" id="NP_001033314.1">
    <property type="nucleotide sequence ID" value="NM_001038225.2"/>
</dbReference>
<dbReference type="SMR" id="Q32L85"/>
<dbReference type="FunCoup" id="Q32L85">
    <property type="interactions" value="783"/>
</dbReference>
<dbReference type="STRING" id="9913.ENSBTAP00000001425"/>
<dbReference type="PaxDb" id="9913-ENSBTAP00000001425"/>
<dbReference type="Ensembl" id="ENSBTAT00000001425.5">
    <property type="protein sequence ID" value="ENSBTAP00000001425.4"/>
    <property type="gene ID" value="ENSBTAG00000001074.5"/>
</dbReference>
<dbReference type="GeneID" id="618888"/>
<dbReference type="KEGG" id="bta:618888"/>
<dbReference type="CTD" id="55776"/>
<dbReference type="VEuPathDB" id="HostDB:ENSBTAG00000001074"/>
<dbReference type="VGNC" id="VGNC:34303">
    <property type="gene designation" value="SAYSD1"/>
</dbReference>
<dbReference type="eggNOG" id="KOG3249">
    <property type="taxonomic scope" value="Eukaryota"/>
</dbReference>
<dbReference type="GeneTree" id="ENSGT00390000004313"/>
<dbReference type="HOGENOM" id="CLU_114258_0_0_1"/>
<dbReference type="InParanoid" id="Q32L85"/>
<dbReference type="OMA" id="LPWWTHY"/>
<dbReference type="OrthoDB" id="71310at2759"/>
<dbReference type="TreeFam" id="TF106140"/>
<dbReference type="Proteomes" id="UP000009136">
    <property type="component" value="Chromosome 23"/>
</dbReference>
<dbReference type="Bgee" id="ENSBTAG00000001074">
    <property type="expression patterns" value="Expressed in oocyte and 107 other cell types or tissues"/>
</dbReference>
<dbReference type="GO" id="GO:0030659">
    <property type="term" value="C:cytoplasmic vesicle membrane"/>
    <property type="evidence" value="ECO:0007669"/>
    <property type="project" value="UniProtKB-SubCell"/>
</dbReference>
<dbReference type="GO" id="GO:0005783">
    <property type="term" value="C:endoplasmic reticulum"/>
    <property type="evidence" value="ECO:0000250"/>
    <property type="project" value="UniProtKB"/>
</dbReference>
<dbReference type="GO" id="GO:0005789">
    <property type="term" value="C:endoplasmic reticulum membrane"/>
    <property type="evidence" value="ECO:0007669"/>
    <property type="project" value="UniProtKB-SubCell"/>
</dbReference>
<dbReference type="GO" id="GO:0141185">
    <property type="term" value="F:UFM1-modified protein reader activity"/>
    <property type="evidence" value="ECO:0000250"/>
    <property type="project" value="UniProtKB"/>
</dbReference>
<dbReference type="GO" id="GO:0006515">
    <property type="term" value="P:protein quality control for misfolded or incompletely synthesized proteins"/>
    <property type="evidence" value="ECO:0000250"/>
    <property type="project" value="UniProtKB"/>
</dbReference>
<dbReference type="GO" id="GO:0072344">
    <property type="term" value="P:rescue of stalled ribosome"/>
    <property type="evidence" value="ECO:0000250"/>
    <property type="project" value="UniProtKB"/>
</dbReference>
<dbReference type="InterPro" id="IPR039159">
    <property type="entry name" value="SAYSD1"/>
</dbReference>
<dbReference type="InterPro" id="IPR019387">
    <property type="entry name" value="SAYSvFN_dom"/>
</dbReference>
<dbReference type="PANTHER" id="PTHR13527">
    <property type="entry name" value="SAYSVFN DOMAIN-CONTAINING PROTEIN 1"/>
    <property type="match status" value="1"/>
</dbReference>
<dbReference type="PANTHER" id="PTHR13527:SF0">
    <property type="entry name" value="SAYSVFN DOMAIN-CONTAINING PROTEIN 1"/>
    <property type="match status" value="1"/>
</dbReference>
<dbReference type="Pfam" id="PF10260">
    <property type="entry name" value="SAYSvFN"/>
    <property type="match status" value="1"/>
</dbReference>
<keyword id="KW-0968">Cytoplasmic vesicle</keyword>
<keyword id="KW-0256">Endoplasmic reticulum</keyword>
<keyword id="KW-0472">Membrane</keyword>
<keyword id="KW-1185">Reference proteome</keyword>
<comment type="function">
    <text evidence="1">Ufmylation 'reader' component of a translocation-associated quality control pathway, a mechanism that takes place when a ribosome has stalled during translation, and which is required to degrade clogged substrates. Specifically recognizes and binds ufmylated ribosomes when a ribosome has stalled, promoting the transport of stalled nascent chain via the TRAPP complex to lysosomes for degradation.</text>
</comment>
<comment type="subunit">
    <text evidence="1">Associates (via N-terminus) with ribosomes.</text>
</comment>
<comment type="subcellular location">
    <subcellularLocation>
        <location evidence="1">Endoplasmic reticulum membrane</location>
    </subcellularLocation>
    <subcellularLocation>
        <location evidence="1">Cytoplasmic vesicle membrane</location>
    </subcellularLocation>
</comment>
<comment type="domain">
    <text evidence="1">The middle helical (MH) region recognizes and binds ufmylated ribosomes.</text>
</comment>
<comment type="similarity">
    <text evidence="3">Belongs to the SAYSD1 family.</text>
</comment>
<proteinExistence type="evidence at transcript level"/>
<evidence type="ECO:0000250" key="1">
    <source>
        <dbReference type="UniProtKB" id="Q9NPB0"/>
    </source>
</evidence>
<evidence type="ECO:0000256" key="2">
    <source>
        <dbReference type="SAM" id="MobiDB-lite"/>
    </source>
</evidence>
<evidence type="ECO:0000305" key="3"/>
<sequence>MEQRLAEFRAARKRAGLVAEPSASSQSTQTSGEKAEAATTPKAPSGWLKRFLVWKPRPPSAQAQPSLAQGAAWPRGLESQPPWSPAEEAPPPPQPPPPQPLTPRDRSLLTSVTLLKVLLWLVLLGLFVELEFGLAYFVLSLFYWMYVGMRGPEEKMQGEKSAYSVFNPGCEAIQGSLTAEQLERELHLRPLPRR</sequence>
<gene>
    <name type="primary">SAYSD1</name>
</gene>
<name>SAYS1_BOVIN</name>
<feature type="chain" id="PRO_0000283064" description="SAYSvFN domain-containing protein 1">
    <location>
        <begin position="1"/>
        <end position="194"/>
    </location>
</feature>
<feature type="topological domain" description="Cytoplasmic" evidence="1">
    <location>
        <begin position="1"/>
        <end position="116"/>
    </location>
</feature>
<feature type="intramembrane region" description="Helical" evidence="1">
    <location>
        <begin position="117"/>
        <end position="137"/>
    </location>
</feature>
<feature type="topological domain" description="Cytoplasmic" evidence="1">
    <location>
        <begin position="138"/>
        <end position="194"/>
    </location>
</feature>
<feature type="region of interest" description="Disordered" evidence="2">
    <location>
        <begin position="1"/>
        <end position="43"/>
    </location>
</feature>
<feature type="region of interest" description="Disordered" evidence="2">
    <location>
        <begin position="58"/>
        <end position="104"/>
    </location>
</feature>
<feature type="region of interest" description="Middle helical (MH)" evidence="1">
    <location>
        <begin position="102"/>
        <end position="116"/>
    </location>
</feature>
<feature type="compositionally biased region" description="Basic and acidic residues" evidence="2">
    <location>
        <begin position="1"/>
        <end position="10"/>
    </location>
</feature>
<feature type="compositionally biased region" description="Polar residues" evidence="2">
    <location>
        <begin position="22"/>
        <end position="32"/>
    </location>
</feature>
<feature type="compositionally biased region" description="Pro residues" evidence="2">
    <location>
        <begin position="82"/>
        <end position="101"/>
    </location>
</feature>
<reference key="1">
    <citation type="submission" date="2005-11" db="EMBL/GenBank/DDBJ databases">
        <authorList>
            <consortium name="NIH - Mammalian Gene Collection (MGC) project"/>
        </authorList>
    </citation>
    <scope>NUCLEOTIDE SEQUENCE [LARGE SCALE MRNA]</scope>
    <source>
        <strain>Crossbred X Angus</strain>
        <tissue>Liver</tissue>
    </source>
</reference>
<organism>
    <name type="scientific">Bos taurus</name>
    <name type="common">Bovine</name>
    <dbReference type="NCBI Taxonomy" id="9913"/>
    <lineage>
        <taxon>Eukaryota</taxon>
        <taxon>Metazoa</taxon>
        <taxon>Chordata</taxon>
        <taxon>Craniata</taxon>
        <taxon>Vertebrata</taxon>
        <taxon>Euteleostomi</taxon>
        <taxon>Mammalia</taxon>
        <taxon>Eutheria</taxon>
        <taxon>Laurasiatheria</taxon>
        <taxon>Artiodactyla</taxon>
        <taxon>Ruminantia</taxon>
        <taxon>Pecora</taxon>
        <taxon>Bovidae</taxon>
        <taxon>Bovinae</taxon>
        <taxon>Bos</taxon>
    </lineage>
</organism>
<accession>Q32L85</accession>
<protein>
    <recommendedName>
        <fullName>SAYSvFN domain-containing protein 1</fullName>
    </recommendedName>
</protein>